<sequence>MDYEALKDQWSDVEERDGIRLSWNTFPSTRMEASRLVVPIAAVYTPLKEKPESPLLQYEPVTCKAPCRAVLNPYANVDVRARIWICPFCLMRNPLPPHYKDITENAIPPELHPQSTTIEYQLARPAPAPPIFVYVVDTCQEEDSLKALKDTLILSLSLLPPNALVGLITFGTMAQVHELGYTECAKSYVFRGSKDYAAKQVQEMLGLLAPGPRPNVPQQPARPPVGPAARFLLPVQQAEFQITNVLEQLQRDPWPVANDKRPLRCTGVALSVAVGLLETSFQNAGGRVMVFTSGPATEGPGHVVGPELKEPIRSHHDIDRDNIKYYKKAVKFYDALAKRAANNGHVVDIFAGCLDQVGLLEMKNLSNFTGGHMLLTDSFTSSQFKQSFVRVFDKDANDNLLMGFNASLEVLTTKELKVTGLIGHAVSLNKKSSSVGETECGIGNTCAWKMCGIDPASSYGVYFEIANQGGPAAVQPGPQRGMMQFLTYYQHSSGHYHLRVTTVARPLSGPTGDPALAQSFDQEAAAVLMARIAVYKADVDDGPDVIRWVDRMLIRLCSRFADYRKDDPTSFRLEKNFTLYPQFMFHLRRSQFLQVFNNSPDETAFYRHVLNHEDVGDSLVMIQPTLDSYSLEHEGSQPVLLDSASIQPTHILLLDTFFHILIFHGETIAEWRKAGYQDQEGYENLKALLEQPKEDARELIADRFPLPRFIVCDAGGSQARFLLSKLNPSTTHTTGGYGGGVTSQTIFTDDVSLQTFMDHLMK</sequence>
<dbReference type="EMBL" id="DS027059">
    <property type="protein sequence ID" value="EAW08388.1"/>
    <property type="molecule type" value="Genomic_DNA"/>
</dbReference>
<dbReference type="RefSeq" id="XP_001269814.1">
    <property type="nucleotide sequence ID" value="XM_001269813.1"/>
</dbReference>
<dbReference type="SMR" id="A1CRW7"/>
<dbReference type="STRING" id="344612.A1CRW7"/>
<dbReference type="EnsemblFungi" id="EAW08388">
    <property type="protein sequence ID" value="EAW08388"/>
    <property type="gene ID" value="ACLA_031210"/>
</dbReference>
<dbReference type="GeneID" id="4700609"/>
<dbReference type="KEGG" id="act:ACLA_031210"/>
<dbReference type="VEuPathDB" id="FungiDB:ACLA_031210"/>
<dbReference type="eggNOG" id="KOG1986">
    <property type="taxonomic scope" value="Eukaryota"/>
</dbReference>
<dbReference type="HOGENOM" id="CLU_008658_3_0_1"/>
<dbReference type="OMA" id="FPPHYAE"/>
<dbReference type="OrthoDB" id="10256289at2759"/>
<dbReference type="Proteomes" id="UP000006701">
    <property type="component" value="Unassembled WGS sequence"/>
</dbReference>
<dbReference type="GO" id="GO:0030127">
    <property type="term" value="C:COPII vesicle coat"/>
    <property type="evidence" value="ECO:0007669"/>
    <property type="project" value="InterPro"/>
</dbReference>
<dbReference type="GO" id="GO:0070971">
    <property type="term" value="C:endoplasmic reticulum exit site"/>
    <property type="evidence" value="ECO:0007669"/>
    <property type="project" value="TreeGrafter"/>
</dbReference>
<dbReference type="GO" id="GO:0005789">
    <property type="term" value="C:endoplasmic reticulum membrane"/>
    <property type="evidence" value="ECO:0007669"/>
    <property type="project" value="UniProtKB-SubCell"/>
</dbReference>
<dbReference type="GO" id="GO:0000139">
    <property type="term" value="C:Golgi membrane"/>
    <property type="evidence" value="ECO:0007669"/>
    <property type="project" value="UniProtKB-SubCell"/>
</dbReference>
<dbReference type="GO" id="GO:0005096">
    <property type="term" value="F:GTPase activator activity"/>
    <property type="evidence" value="ECO:0007669"/>
    <property type="project" value="TreeGrafter"/>
</dbReference>
<dbReference type="GO" id="GO:0008270">
    <property type="term" value="F:zinc ion binding"/>
    <property type="evidence" value="ECO:0007669"/>
    <property type="project" value="InterPro"/>
</dbReference>
<dbReference type="GO" id="GO:0090110">
    <property type="term" value="P:COPII-coated vesicle cargo loading"/>
    <property type="evidence" value="ECO:0007669"/>
    <property type="project" value="TreeGrafter"/>
</dbReference>
<dbReference type="GO" id="GO:0006886">
    <property type="term" value="P:intracellular protein transport"/>
    <property type="evidence" value="ECO:0007669"/>
    <property type="project" value="InterPro"/>
</dbReference>
<dbReference type="CDD" id="cd01478">
    <property type="entry name" value="Sec23-like"/>
    <property type="match status" value="1"/>
</dbReference>
<dbReference type="CDD" id="cd11287">
    <property type="entry name" value="Sec23_C"/>
    <property type="match status" value="1"/>
</dbReference>
<dbReference type="FunFam" id="1.20.120.730:FF:000001">
    <property type="entry name" value="Protein transport protein SEC23"/>
    <property type="match status" value="1"/>
</dbReference>
<dbReference type="FunFam" id="2.30.30.380:FF:000001">
    <property type="entry name" value="Protein transport protein SEC23"/>
    <property type="match status" value="1"/>
</dbReference>
<dbReference type="FunFam" id="3.40.20.10:FF:000006">
    <property type="entry name" value="Protein transport protein SEC23"/>
    <property type="match status" value="1"/>
</dbReference>
<dbReference type="FunFam" id="3.40.50.410:FF:000008">
    <property type="entry name" value="Protein transport protein SEC23"/>
    <property type="match status" value="1"/>
</dbReference>
<dbReference type="Gene3D" id="2.60.40.1670">
    <property type="entry name" value="beta-sandwich domain of Sec23/24"/>
    <property type="match status" value="1"/>
</dbReference>
<dbReference type="Gene3D" id="1.20.120.730">
    <property type="entry name" value="Sec23/Sec24 helical domain"/>
    <property type="match status" value="1"/>
</dbReference>
<dbReference type="Gene3D" id="3.40.20.10">
    <property type="entry name" value="Severin"/>
    <property type="match status" value="1"/>
</dbReference>
<dbReference type="Gene3D" id="3.40.50.410">
    <property type="entry name" value="von Willebrand factor, type A domain"/>
    <property type="match status" value="1"/>
</dbReference>
<dbReference type="Gene3D" id="2.30.30.380">
    <property type="entry name" value="Zn-finger domain of Sec23/24"/>
    <property type="match status" value="1"/>
</dbReference>
<dbReference type="InterPro" id="IPR029006">
    <property type="entry name" value="ADF-H/Gelsolin-like_dom_sf"/>
</dbReference>
<dbReference type="InterPro" id="IPR007123">
    <property type="entry name" value="Gelsolin-like_dom"/>
</dbReference>
<dbReference type="InterPro" id="IPR036180">
    <property type="entry name" value="Gelsolin-like_dom_sf"/>
</dbReference>
<dbReference type="InterPro" id="IPR037364">
    <property type="entry name" value="Sec23"/>
</dbReference>
<dbReference type="InterPro" id="IPR006900">
    <property type="entry name" value="Sec23/24_helical_dom"/>
</dbReference>
<dbReference type="InterPro" id="IPR036175">
    <property type="entry name" value="Sec23/24_helical_dom_sf"/>
</dbReference>
<dbReference type="InterPro" id="IPR006896">
    <property type="entry name" value="Sec23/24_trunk_dom"/>
</dbReference>
<dbReference type="InterPro" id="IPR012990">
    <property type="entry name" value="Sec23_24_beta_S"/>
</dbReference>
<dbReference type="InterPro" id="IPR037550">
    <property type="entry name" value="Sec23_C"/>
</dbReference>
<dbReference type="InterPro" id="IPR036465">
    <property type="entry name" value="vWFA_dom_sf"/>
</dbReference>
<dbReference type="InterPro" id="IPR006895">
    <property type="entry name" value="Znf_Sec23_Sec24"/>
</dbReference>
<dbReference type="InterPro" id="IPR036174">
    <property type="entry name" value="Znf_Sec23_Sec24_sf"/>
</dbReference>
<dbReference type="PANTHER" id="PTHR11141">
    <property type="entry name" value="PROTEIN TRANSPORT PROTEIN SEC23"/>
    <property type="match status" value="1"/>
</dbReference>
<dbReference type="PANTHER" id="PTHR11141:SF0">
    <property type="entry name" value="PROTEIN TRANSPORT PROTEIN SEC23"/>
    <property type="match status" value="1"/>
</dbReference>
<dbReference type="Pfam" id="PF00626">
    <property type="entry name" value="Gelsolin"/>
    <property type="match status" value="1"/>
</dbReference>
<dbReference type="Pfam" id="PF08033">
    <property type="entry name" value="Sec23_BS"/>
    <property type="match status" value="1"/>
</dbReference>
<dbReference type="Pfam" id="PF04815">
    <property type="entry name" value="Sec23_helical"/>
    <property type="match status" value="1"/>
</dbReference>
<dbReference type="Pfam" id="PF04811">
    <property type="entry name" value="Sec23_trunk"/>
    <property type="match status" value="1"/>
</dbReference>
<dbReference type="Pfam" id="PF04810">
    <property type="entry name" value="zf-Sec23_Sec24"/>
    <property type="match status" value="1"/>
</dbReference>
<dbReference type="SUPFAM" id="SSF81995">
    <property type="entry name" value="beta-sandwich domain of Sec23/24"/>
    <property type="match status" value="1"/>
</dbReference>
<dbReference type="SUPFAM" id="SSF82754">
    <property type="entry name" value="C-terminal, gelsolin-like domain of Sec23/24"/>
    <property type="match status" value="1"/>
</dbReference>
<dbReference type="SUPFAM" id="SSF81811">
    <property type="entry name" value="Helical domain of Sec23/24"/>
    <property type="match status" value="1"/>
</dbReference>
<dbReference type="SUPFAM" id="SSF53300">
    <property type="entry name" value="vWA-like"/>
    <property type="match status" value="1"/>
</dbReference>
<dbReference type="SUPFAM" id="SSF82919">
    <property type="entry name" value="Zn-finger domain of Sec23/24"/>
    <property type="match status" value="1"/>
</dbReference>
<proteinExistence type="inferred from homology"/>
<protein>
    <recommendedName>
        <fullName>Protein transport protein sec23</fullName>
    </recommendedName>
</protein>
<accession>A1CRW7</accession>
<evidence type="ECO:0000250" key="1"/>
<evidence type="ECO:0000305" key="2"/>
<keyword id="KW-0963">Cytoplasm</keyword>
<keyword id="KW-0968">Cytoplasmic vesicle</keyword>
<keyword id="KW-0256">Endoplasmic reticulum</keyword>
<keyword id="KW-0931">ER-Golgi transport</keyword>
<keyword id="KW-0333">Golgi apparatus</keyword>
<keyword id="KW-0472">Membrane</keyword>
<keyword id="KW-0479">Metal-binding</keyword>
<keyword id="KW-0653">Protein transport</keyword>
<keyword id="KW-1185">Reference proteome</keyword>
<keyword id="KW-0813">Transport</keyword>
<keyword id="KW-0862">Zinc</keyword>
<organism>
    <name type="scientific">Aspergillus clavatus (strain ATCC 1007 / CBS 513.65 / DSM 816 / NCTC 3887 / NRRL 1 / QM 1276 / 107)</name>
    <dbReference type="NCBI Taxonomy" id="344612"/>
    <lineage>
        <taxon>Eukaryota</taxon>
        <taxon>Fungi</taxon>
        <taxon>Dikarya</taxon>
        <taxon>Ascomycota</taxon>
        <taxon>Pezizomycotina</taxon>
        <taxon>Eurotiomycetes</taxon>
        <taxon>Eurotiomycetidae</taxon>
        <taxon>Eurotiales</taxon>
        <taxon>Aspergillaceae</taxon>
        <taxon>Aspergillus</taxon>
        <taxon>Aspergillus subgen. Fumigati</taxon>
    </lineage>
</organism>
<reference key="1">
    <citation type="journal article" date="2008" name="PLoS Genet.">
        <title>Genomic islands in the pathogenic filamentous fungus Aspergillus fumigatus.</title>
        <authorList>
            <person name="Fedorova N.D."/>
            <person name="Khaldi N."/>
            <person name="Joardar V.S."/>
            <person name="Maiti R."/>
            <person name="Amedeo P."/>
            <person name="Anderson M.J."/>
            <person name="Crabtree J."/>
            <person name="Silva J.C."/>
            <person name="Badger J.H."/>
            <person name="Albarraq A."/>
            <person name="Angiuoli S."/>
            <person name="Bussey H."/>
            <person name="Bowyer P."/>
            <person name="Cotty P.J."/>
            <person name="Dyer P.S."/>
            <person name="Egan A."/>
            <person name="Galens K."/>
            <person name="Fraser-Liggett C.M."/>
            <person name="Haas B.J."/>
            <person name="Inman J.M."/>
            <person name="Kent R."/>
            <person name="Lemieux S."/>
            <person name="Malavazi I."/>
            <person name="Orvis J."/>
            <person name="Roemer T."/>
            <person name="Ronning C.M."/>
            <person name="Sundaram J.P."/>
            <person name="Sutton G."/>
            <person name="Turner G."/>
            <person name="Venter J.C."/>
            <person name="White O.R."/>
            <person name="Whitty B.R."/>
            <person name="Youngman P."/>
            <person name="Wolfe K.H."/>
            <person name="Goldman G.H."/>
            <person name="Wortman J.R."/>
            <person name="Jiang B."/>
            <person name="Denning D.W."/>
            <person name="Nierman W.C."/>
        </authorList>
    </citation>
    <scope>NUCLEOTIDE SEQUENCE [LARGE SCALE GENOMIC DNA]</scope>
    <source>
        <strain>ATCC 1007 / CBS 513.65 / DSM 816 / NCTC 3887 / NRRL 1 / QM 1276 / 107</strain>
    </source>
</reference>
<comment type="function">
    <text evidence="1">Component of the coat protein complex II (COPII) which promotes the formation of transport vesicles from the endoplasmic reticulum (ER). The coat has two main functions, the physical deformation of the endoplasmic reticulum membrane into vesicles and the selection of cargo molecules (By similarity).</text>
</comment>
<comment type="subunit">
    <text evidence="1">The COPII coat is composed of at least 5 proteins: the sec23/24 complex, the sec13/31 complex, and the protein sar1.</text>
</comment>
<comment type="subcellular location">
    <subcellularLocation>
        <location evidence="1">Cytoplasm</location>
    </subcellularLocation>
    <subcellularLocation>
        <location evidence="1">Cytoplasmic vesicle</location>
        <location evidence="1">COPII-coated vesicle membrane</location>
        <topology evidence="1">Peripheral membrane protein</topology>
        <orientation evidence="1">Cytoplasmic side</orientation>
    </subcellularLocation>
    <subcellularLocation>
        <location evidence="1">Endoplasmic reticulum membrane</location>
        <topology evidence="1">Peripheral membrane protein</topology>
        <orientation evidence="1">Cytoplasmic side</orientation>
    </subcellularLocation>
    <subcellularLocation>
        <location evidence="1">Golgi apparatus membrane</location>
        <topology evidence="1">Peripheral membrane protein</topology>
        <orientation evidence="1">Cytoplasmic side</orientation>
    </subcellularLocation>
</comment>
<comment type="similarity">
    <text evidence="2">Belongs to the SEC23/SEC24 family. SEC23 subfamily.</text>
</comment>
<feature type="chain" id="PRO_0000295450" description="Protein transport protein sec23">
    <location>
        <begin position="1"/>
        <end position="762"/>
    </location>
</feature>
<feature type="binding site" evidence="1">
    <location>
        <position position="63"/>
    </location>
    <ligand>
        <name>Zn(2+)</name>
        <dbReference type="ChEBI" id="CHEBI:29105"/>
    </ligand>
</feature>
<feature type="binding site" evidence="1">
    <location>
        <position position="67"/>
    </location>
    <ligand>
        <name>Zn(2+)</name>
        <dbReference type="ChEBI" id="CHEBI:29105"/>
    </ligand>
</feature>
<feature type="binding site" evidence="1">
    <location>
        <position position="86"/>
    </location>
    <ligand>
        <name>Zn(2+)</name>
        <dbReference type="ChEBI" id="CHEBI:29105"/>
    </ligand>
</feature>
<feature type="binding site" evidence="1">
    <location>
        <position position="89"/>
    </location>
    <ligand>
        <name>Zn(2+)</name>
        <dbReference type="ChEBI" id="CHEBI:29105"/>
    </ligand>
</feature>
<gene>
    <name type="primary">sec23</name>
    <name type="ORF">ACLA_031210</name>
</gene>
<name>SEC23_ASPCL</name>